<feature type="chain" id="PRO_1000136936" description="Cell division protein ZapD">
    <location>
        <begin position="1"/>
        <end position="247"/>
    </location>
</feature>
<reference key="1">
    <citation type="journal article" date="2011" name="Proc. Natl. Acad. Sci. U.S.A.">
        <title>Genomic anatomy of Escherichia coli O157:H7 outbreaks.</title>
        <authorList>
            <person name="Eppinger M."/>
            <person name="Mammel M.K."/>
            <person name="Leclerc J.E."/>
            <person name="Ravel J."/>
            <person name="Cebula T.A."/>
        </authorList>
    </citation>
    <scope>NUCLEOTIDE SEQUENCE [LARGE SCALE GENOMIC DNA]</scope>
    <source>
        <strain>EC4115 / EHEC</strain>
    </source>
</reference>
<gene>
    <name evidence="1" type="primary">zapD</name>
    <name type="ordered locus">ECH74115_0109</name>
</gene>
<keyword id="KW-0131">Cell cycle</keyword>
<keyword id="KW-0132">Cell division</keyword>
<keyword id="KW-0963">Cytoplasm</keyword>
<keyword id="KW-0717">Septation</keyword>
<proteinExistence type="inferred from homology"/>
<organism>
    <name type="scientific">Escherichia coli O157:H7 (strain EC4115 / EHEC)</name>
    <dbReference type="NCBI Taxonomy" id="444450"/>
    <lineage>
        <taxon>Bacteria</taxon>
        <taxon>Pseudomonadati</taxon>
        <taxon>Pseudomonadota</taxon>
        <taxon>Gammaproteobacteria</taxon>
        <taxon>Enterobacterales</taxon>
        <taxon>Enterobacteriaceae</taxon>
        <taxon>Escherichia</taxon>
    </lineage>
</organism>
<accession>B5YZD7</accession>
<comment type="function">
    <text evidence="1">Cell division factor that enhances FtsZ-ring assembly. Directly interacts with FtsZ and promotes bundling of FtsZ protofilaments, with a reduction in FtsZ GTPase activity.</text>
</comment>
<comment type="subunit">
    <text evidence="1">Interacts with FtsZ.</text>
</comment>
<comment type="subcellular location">
    <subcellularLocation>
        <location evidence="1">Cytoplasm</location>
    </subcellularLocation>
    <text evidence="1">Localizes to mid-cell in an FtsZ-dependent manner.</text>
</comment>
<comment type="similarity">
    <text evidence="1">Belongs to the ZapD family.</text>
</comment>
<evidence type="ECO:0000255" key="1">
    <source>
        <dbReference type="HAMAP-Rule" id="MF_01092"/>
    </source>
</evidence>
<dbReference type="EMBL" id="CP001164">
    <property type="protein sequence ID" value="ACI38181.1"/>
    <property type="molecule type" value="Genomic_DNA"/>
</dbReference>
<dbReference type="RefSeq" id="WP_001194728.1">
    <property type="nucleotide sequence ID" value="NC_011353.1"/>
</dbReference>
<dbReference type="SMR" id="B5YZD7"/>
<dbReference type="KEGG" id="ecf:ECH74115_0109"/>
<dbReference type="HOGENOM" id="CLU_076303_0_0_6"/>
<dbReference type="GO" id="GO:0032153">
    <property type="term" value="C:cell division site"/>
    <property type="evidence" value="ECO:0007669"/>
    <property type="project" value="TreeGrafter"/>
</dbReference>
<dbReference type="GO" id="GO:0005737">
    <property type="term" value="C:cytoplasm"/>
    <property type="evidence" value="ECO:0007669"/>
    <property type="project" value="UniProtKB-SubCell"/>
</dbReference>
<dbReference type="GO" id="GO:0000917">
    <property type="term" value="P:division septum assembly"/>
    <property type="evidence" value="ECO:0007669"/>
    <property type="project" value="UniProtKB-KW"/>
</dbReference>
<dbReference type="GO" id="GO:0043093">
    <property type="term" value="P:FtsZ-dependent cytokinesis"/>
    <property type="evidence" value="ECO:0007669"/>
    <property type="project" value="UniProtKB-UniRule"/>
</dbReference>
<dbReference type="FunFam" id="1.10.3900.10:FF:000001">
    <property type="entry name" value="Cell division protein ZapD"/>
    <property type="match status" value="1"/>
</dbReference>
<dbReference type="FunFam" id="2.60.440.10:FF:000001">
    <property type="entry name" value="Cell division protein ZapD"/>
    <property type="match status" value="1"/>
</dbReference>
<dbReference type="Gene3D" id="1.10.3900.10">
    <property type="entry name" value="YacF-like"/>
    <property type="match status" value="1"/>
</dbReference>
<dbReference type="Gene3D" id="2.60.440.10">
    <property type="entry name" value="YacF-like domains"/>
    <property type="match status" value="1"/>
</dbReference>
<dbReference type="HAMAP" id="MF_01092">
    <property type="entry name" value="ZapD"/>
    <property type="match status" value="1"/>
</dbReference>
<dbReference type="InterPro" id="IPR009777">
    <property type="entry name" value="ZapD"/>
</dbReference>
<dbReference type="InterPro" id="IPR027462">
    <property type="entry name" value="ZapD_C"/>
</dbReference>
<dbReference type="InterPro" id="IPR036268">
    <property type="entry name" value="ZapD_sf"/>
</dbReference>
<dbReference type="NCBIfam" id="NF003653">
    <property type="entry name" value="PRK05287.1-1"/>
    <property type="match status" value="1"/>
</dbReference>
<dbReference type="NCBIfam" id="NF003655">
    <property type="entry name" value="PRK05287.1-3"/>
    <property type="match status" value="1"/>
</dbReference>
<dbReference type="PANTHER" id="PTHR39455">
    <property type="entry name" value="CELL DIVISION PROTEIN ZAPD"/>
    <property type="match status" value="1"/>
</dbReference>
<dbReference type="PANTHER" id="PTHR39455:SF1">
    <property type="entry name" value="CELL DIVISION PROTEIN ZAPD"/>
    <property type="match status" value="1"/>
</dbReference>
<dbReference type="Pfam" id="PF07072">
    <property type="entry name" value="ZapD"/>
    <property type="match status" value="1"/>
</dbReference>
<dbReference type="SUPFAM" id="SSF160950">
    <property type="entry name" value="YacF-like"/>
    <property type="match status" value="1"/>
</dbReference>
<protein>
    <recommendedName>
        <fullName evidence="1">Cell division protein ZapD</fullName>
    </recommendedName>
    <alternativeName>
        <fullName evidence="1">Z ring-associated protein D</fullName>
    </alternativeName>
</protein>
<name>ZAPD_ECO5E</name>
<sequence>MQTQVLFEHPLNEKMRTWLRIEFLIQQLTVNLPIVDHAGALHFFRNVSELLDVFERGEVRTELLKELDRQQRKLQTWIGVPGVDQSRIEALIQQLKAAGSVLISAPRIGQFLREDRLIALVRQRLSIPGGCCSFDLPTLHIWLHLPQAQRDCQVETWIASLNPLTQALTMVLDLIRQSAPFRKQTSLNGFYQDNGGDADLLRLNLSLDSQLYPQISGHKSRFAIRFMPLDTENGQVPERLDFELACC</sequence>